<gene>
    <name type="primary">slc25a48</name>
    <name type="ORF">zgc:92090</name>
</gene>
<evidence type="ECO:0000250" key="1"/>
<evidence type="ECO:0000255" key="2"/>
<evidence type="ECO:0000305" key="3"/>
<dbReference type="EMBL" id="BC075888">
    <property type="protein sequence ID" value="AAH75888.1"/>
    <property type="molecule type" value="mRNA"/>
</dbReference>
<dbReference type="RefSeq" id="NP_001002367.1">
    <property type="nucleotide sequence ID" value="NM_001002367.1"/>
</dbReference>
<dbReference type="SMR" id="Q6DHS9"/>
<dbReference type="FunCoup" id="Q6DHS9">
    <property type="interactions" value="4"/>
</dbReference>
<dbReference type="STRING" id="7955.ENSDARP00000040954"/>
<dbReference type="PaxDb" id="7955-ENSDARP00000040954"/>
<dbReference type="Ensembl" id="ENSDART00000040955">
    <property type="protein sequence ID" value="ENSDARP00000040954"/>
    <property type="gene ID" value="ENSDARG00000021250"/>
</dbReference>
<dbReference type="GeneID" id="436640"/>
<dbReference type="KEGG" id="dre:436640"/>
<dbReference type="AGR" id="ZFIN:ZDB-GENE-040718-60"/>
<dbReference type="CTD" id="153328"/>
<dbReference type="ZFIN" id="ZDB-GENE-040718-60">
    <property type="gene designation" value="slc25a48"/>
</dbReference>
<dbReference type="eggNOG" id="KOG0762">
    <property type="taxonomic scope" value="Eukaryota"/>
</dbReference>
<dbReference type="HOGENOM" id="CLU_015166_16_1_1"/>
<dbReference type="InParanoid" id="Q6DHS9"/>
<dbReference type="OMA" id="VWFLAFE"/>
<dbReference type="OrthoDB" id="193856at2759"/>
<dbReference type="PhylomeDB" id="Q6DHS9"/>
<dbReference type="TreeFam" id="TF351739"/>
<dbReference type="PRO" id="PR:Q6DHS9"/>
<dbReference type="Proteomes" id="UP000000437">
    <property type="component" value="Chromosome 14"/>
</dbReference>
<dbReference type="Bgee" id="ENSDARG00000021250">
    <property type="expression patterns" value="Expressed in liver and 18 other cell types or tissues"/>
</dbReference>
<dbReference type="ExpressionAtlas" id="Q6DHS9">
    <property type="expression patterns" value="baseline and differential"/>
</dbReference>
<dbReference type="GO" id="GO:0005743">
    <property type="term" value="C:mitochondrial inner membrane"/>
    <property type="evidence" value="ECO:0007669"/>
    <property type="project" value="UniProtKB-SubCell"/>
</dbReference>
<dbReference type="GO" id="GO:0005739">
    <property type="term" value="C:mitochondrion"/>
    <property type="evidence" value="ECO:0000318"/>
    <property type="project" value="GO_Central"/>
</dbReference>
<dbReference type="GO" id="GO:0022857">
    <property type="term" value="F:transmembrane transporter activity"/>
    <property type="evidence" value="ECO:0000318"/>
    <property type="project" value="GO_Central"/>
</dbReference>
<dbReference type="FunFam" id="1.50.40.10:FF:000058">
    <property type="entry name" value="Solute carrier family 25 member 48"/>
    <property type="match status" value="1"/>
</dbReference>
<dbReference type="Gene3D" id="1.50.40.10">
    <property type="entry name" value="Mitochondrial carrier domain"/>
    <property type="match status" value="1"/>
</dbReference>
<dbReference type="InterPro" id="IPR002067">
    <property type="entry name" value="Mit_carrier"/>
</dbReference>
<dbReference type="InterPro" id="IPR050567">
    <property type="entry name" value="Mitochondrial_Carrier"/>
</dbReference>
<dbReference type="InterPro" id="IPR018108">
    <property type="entry name" value="Mitochondrial_sb/sol_carrier"/>
</dbReference>
<dbReference type="InterPro" id="IPR023395">
    <property type="entry name" value="Mt_carrier_dom_sf"/>
</dbReference>
<dbReference type="PANTHER" id="PTHR45624">
    <property type="entry name" value="MITOCHONDRIAL BASIC AMINO ACIDS TRANSPORTER-RELATED"/>
    <property type="match status" value="1"/>
</dbReference>
<dbReference type="PANTHER" id="PTHR45624:SF7">
    <property type="entry name" value="SOLUTE CARRIER FAMILY 25 MEMBER 48"/>
    <property type="match status" value="1"/>
</dbReference>
<dbReference type="Pfam" id="PF00153">
    <property type="entry name" value="Mito_carr"/>
    <property type="match status" value="3"/>
</dbReference>
<dbReference type="PRINTS" id="PR00926">
    <property type="entry name" value="MITOCARRIER"/>
</dbReference>
<dbReference type="SUPFAM" id="SSF103506">
    <property type="entry name" value="Mitochondrial carrier"/>
    <property type="match status" value="1"/>
</dbReference>
<dbReference type="PROSITE" id="PS50920">
    <property type="entry name" value="SOLCAR"/>
    <property type="match status" value="3"/>
</dbReference>
<protein>
    <recommendedName>
        <fullName>Solute carrier family 25 member 48</fullName>
    </recommendedName>
</protein>
<name>S2548_DANRE</name>
<keyword id="KW-0472">Membrane</keyword>
<keyword id="KW-0496">Mitochondrion</keyword>
<keyword id="KW-0999">Mitochondrion inner membrane</keyword>
<keyword id="KW-1185">Reference proteome</keyword>
<keyword id="KW-0677">Repeat</keyword>
<keyword id="KW-0812">Transmembrane</keyword>
<keyword id="KW-1133">Transmembrane helix</keyword>
<keyword id="KW-0813">Transport</keyword>
<proteinExistence type="evidence at transcript level"/>
<reference key="1">
    <citation type="submission" date="2004-07" db="EMBL/GenBank/DDBJ databases">
        <authorList>
            <consortium name="NIH - Zebrafish Gene Collection (ZGC) project"/>
        </authorList>
    </citation>
    <scope>NUCLEOTIDE SEQUENCE [LARGE SCALE MRNA]</scope>
</reference>
<organism>
    <name type="scientific">Danio rerio</name>
    <name type="common">Zebrafish</name>
    <name type="synonym">Brachydanio rerio</name>
    <dbReference type="NCBI Taxonomy" id="7955"/>
    <lineage>
        <taxon>Eukaryota</taxon>
        <taxon>Metazoa</taxon>
        <taxon>Chordata</taxon>
        <taxon>Craniata</taxon>
        <taxon>Vertebrata</taxon>
        <taxon>Euteleostomi</taxon>
        <taxon>Actinopterygii</taxon>
        <taxon>Neopterygii</taxon>
        <taxon>Teleostei</taxon>
        <taxon>Ostariophysi</taxon>
        <taxon>Cypriniformes</taxon>
        <taxon>Danionidae</taxon>
        <taxon>Danioninae</taxon>
        <taxon>Danio</taxon>
    </lineage>
</organism>
<sequence>MTVFQLDDFLAGWIGGASSVIVGHPLDTVKTRLQAGKGYKNTFHCVVTIYKKENVIGFFKGLSFPLASITLYNSMVFGFFSNTQRLISKYRYGDGRHPCSMLDLTVASMLTGLVSVGVGAPVDLVKIRLQMQTQPVLAENFNLAGNGSVPLRSMGIQSQSFYRGPLHCISTVLQNEGIQGLYRGAGAMILRDIPGYALYFIPYTLFCNWLNPDDNSSPPPCCIWLAGGLAGSISWVTATPSDVVKSRLQADAMHQRKYKGILHCIMQSYRTEGIHVFFRGATVNAIRGFPMCATMFLGYELSLQFFRSF</sequence>
<feature type="chain" id="PRO_0000325770" description="Solute carrier family 25 member 48">
    <location>
        <begin position="1"/>
        <end position="309"/>
    </location>
</feature>
<feature type="transmembrane region" description="Helical; Name=1" evidence="2">
    <location>
        <begin position="9"/>
        <end position="29"/>
    </location>
</feature>
<feature type="transmembrane region" description="Helical; Name=2" evidence="2">
    <location>
        <begin position="61"/>
        <end position="81"/>
    </location>
</feature>
<feature type="transmembrane region" description="Helical; Name=3" evidence="2">
    <location>
        <begin position="105"/>
        <end position="125"/>
    </location>
</feature>
<feature type="transmembrane region" description="Helical; Name=4" evidence="2">
    <location>
        <begin position="186"/>
        <end position="206"/>
    </location>
</feature>
<feature type="transmembrane region" description="Helical; Name=5" evidence="2">
    <location>
        <begin position="218"/>
        <end position="238"/>
    </location>
</feature>
<feature type="transmembrane region" description="Helical; Name=6" evidence="2">
    <location>
        <begin position="281"/>
        <end position="299"/>
    </location>
</feature>
<feature type="repeat" description="Solcar 1">
    <location>
        <begin position="3"/>
        <end position="86"/>
    </location>
</feature>
<feature type="repeat" description="Solcar 2">
    <location>
        <begin position="99"/>
        <end position="209"/>
    </location>
</feature>
<feature type="repeat" description="Solcar 3">
    <location>
        <begin position="218"/>
        <end position="305"/>
    </location>
</feature>
<comment type="subcellular location">
    <subcellularLocation>
        <location evidence="1">Mitochondrion inner membrane</location>
        <topology evidence="1">Multi-pass membrane protein</topology>
    </subcellularLocation>
</comment>
<comment type="similarity">
    <text evidence="3">Belongs to the mitochondrial carrier (TC 2.A.29) family.</text>
</comment>
<accession>Q6DHS9</accession>